<gene>
    <name evidence="1" type="primary">recR</name>
    <name type="ordered locus">BT_1081</name>
</gene>
<dbReference type="EMBL" id="AE015928">
    <property type="protein sequence ID" value="AAO76188.1"/>
    <property type="molecule type" value="Genomic_DNA"/>
</dbReference>
<dbReference type="RefSeq" id="NP_809994.1">
    <property type="nucleotide sequence ID" value="NC_004663.1"/>
</dbReference>
<dbReference type="RefSeq" id="WP_008763508.1">
    <property type="nucleotide sequence ID" value="NC_004663.1"/>
</dbReference>
<dbReference type="SMR" id="Q8A8T6"/>
<dbReference type="FunCoup" id="Q8A8T6">
    <property type="interactions" value="219"/>
</dbReference>
<dbReference type="STRING" id="226186.BT_1081"/>
<dbReference type="PaxDb" id="226186-BT_1081"/>
<dbReference type="EnsemblBacteria" id="AAO76188">
    <property type="protein sequence ID" value="AAO76188"/>
    <property type="gene ID" value="BT_1081"/>
</dbReference>
<dbReference type="GeneID" id="60927057"/>
<dbReference type="KEGG" id="bth:BT_1081"/>
<dbReference type="PATRIC" id="fig|226186.12.peg.1098"/>
<dbReference type="eggNOG" id="COG0353">
    <property type="taxonomic scope" value="Bacteria"/>
</dbReference>
<dbReference type="HOGENOM" id="CLU_060739_1_1_10"/>
<dbReference type="InParanoid" id="Q8A8T6"/>
<dbReference type="OrthoDB" id="9802672at2"/>
<dbReference type="Proteomes" id="UP000001414">
    <property type="component" value="Chromosome"/>
</dbReference>
<dbReference type="GO" id="GO:0003677">
    <property type="term" value="F:DNA binding"/>
    <property type="evidence" value="ECO:0007669"/>
    <property type="project" value="UniProtKB-UniRule"/>
</dbReference>
<dbReference type="GO" id="GO:0008270">
    <property type="term" value="F:zinc ion binding"/>
    <property type="evidence" value="ECO:0007669"/>
    <property type="project" value="UniProtKB-KW"/>
</dbReference>
<dbReference type="GO" id="GO:0006302">
    <property type="term" value="P:double-strand break repair"/>
    <property type="evidence" value="ECO:0000318"/>
    <property type="project" value="GO_Central"/>
</dbReference>
<dbReference type="GO" id="GO:0000725">
    <property type="term" value="P:recombinational repair"/>
    <property type="evidence" value="ECO:0000318"/>
    <property type="project" value="GO_Central"/>
</dbReference>
<dbReference type="CDD" id="cd01025">
    <property type="entry name" value="TOPRIM_recR"/>
    <property type="match status" value="1"/>
</dbReference>
<dbReference type="Gene3D" id="3.30.60.80">
    <property type="match status" value="1"/>
</dbReference>
<dbReference type="Gene3D" id="3.40.1360.10">
    <property type="match status" value="1"/>
</dbReference>
<dbReference type="Gene3D" id="6.10.250.240">
    <property type="match status" value="1"/>
</dbReference>
<dbReference type="Gene3D" id="1.10.8.420">
    <property type="entry name" value="RecR Domain 1"/>
    <property type="match status" value="1"/>
</dbReference>
<dbReference type="HAMAP" id="MF_00017">
    <property type="entry name" value="RecR"/>
    <property type="match status" value="1"/>
</dbReference>
<dbReference type="InterPro" id="IPR000093">
    <property type="entry name" value="DNA_Rcmb_RecR"/>
</dbReference>
<dbReference type="InterPro" id="IPR023627">
    <property type="entry name" value="Rcmb_RecR"/>
</dbReference>
<dbReference type="InterPro" id="IPR015967">
    <property type="entry name" value="Rcmb_RecR_Znf"/>
</dbReference>
<dbReference type="InterPro" id="IPR006171">
    <property type="entry name" value="TOPRIM_dom"/>
</dbReference>
<dbReference type="InterPro" id="IPR034137">
    <property type="entry name" value="TOPRIM_RecR"/>
</dbReference>
<dbReference type="NCBIfam" id="TIGR00615">
    <property type="entry name" value="recR"/>
    <property type="match status" value="1"/>
</dbReference>
<dbReference type="PANTHER" id="PTHR30446">
    <property type="entry name" value="RECOMBINATION PROTEIN RECR"/>
    <property type="match status" value="1"/>
</dbReference>
<dbReference type="PANTHER" id="PTHR30446:SF0">
    <property type="entry name" value="RECOMBINATION PROTEIN RECR"/>
    <property type="match status" value="1"/>
</dbReference>
<dbReference type="Pfam" id="PF21175">
    <property type="entry name" value="RecR_C"/>
    <property type="match status" value="1"/>
</dbReference>
<dbReference type="Pfam" id="PF21176">
    <property type="entry name" value="RecR_HhH"/>
    <property type="match status" value="1"/>
</dbReference>
<dbReference type="Pfam" id="PF02132">
    <property type="entry name" value="RecR_ZnF"/>
    <property type="match status" value="1"/>
</dbReference>
<dbReference type="Pfam" id="PF13662">
    <property type="entry name" value="Toprim_4"/>
    <property type="match status" value="1"/>
</dbReference>
<dbReference type="SMART" id="SM00493">
    <property type="entry name" value="TOPRIM"/>
    <property type="match status" value="1"/>
</dbReference>
<dbReference type="SUPFAM" id="SSF111304">
    <property type="entry name" value="Recombination protein RecR"/>
    <property type="match status" value="1"/>
</dbReference>
<dbReference type="PROSITE" id="PS01300">
    <property type="entry name" value="RECR"/>
    <property type="match status" value="1"/>
</dbReference>
<dbReference type="PROSITE" id="PS50880">
    <property type="entry name" value="TOPRIM"/>
    <property type="match status" value="1"/>
</dbReference>
<comment type="function">
    <text evidence="1">May play a role in DNA repair. It seems to be involved in an RecBC-independent recombinational process of DNA repair. It may act with RecF and RecO.</text>
</comment>
<comment type="similarity">
    <text evidence="1">Belongs to the RecR family.</text>
</comment>
<accession>Q8A8T6</accession>
<proteinExistence type="inferred from homology"/>
<protein>
    <recommendedName>
        <fullName evidence="1">Recombination protein RecR</fullName>
    </recommendedName>
</protein>
<sequence>MNQQYPSVLLEKAVGEFSKLPGIGRKTAMRLVLHLLRQDTATVEAFGNSIITLKREVKYCKVCHNISDTETCQICANPQRDASTVCVVENIRDVMAVEATQQYRGLYHVLGGVISPMDGVGPSDLQIESLVQRVSEGGIKEVILALSTTMEGDTTNFYIYRKLEKMGVKLSVIARGISVGDELEYADEITLGRSIVNRTLFTGTV</sequence>
<keyword id="KW-0227">DNA damage</keyword>
<keyword id="KW-0233">DNA recombination</keyword>
<keyword id="KW-0234">DNA repair</keyword>
<keyword id="KW-0479">Metal-binding</keyword>
<keyword id="KW-1185">Reference proteome</keyword>
<keyword id="KW-0862">Zinc</keyword>
<keyword id="KW-0863">Zinc-finger</keyword>
<reference key="1">
    <citation type="journal article" date="2003" name="Science">
        <title>A genomic view of the human-Bacteroides thetaiotaomicron symbiosis.</title>
        <authorList>
            <person name="Xu J."/>
            <person name="Bjursell M.K."/>
            <person name="Himrod J."/>
            <person name="Deng S."/>
            <person name="Carmichael L.K."/>
            <person name="Chiang H.C."/>
            <person name="Hooper L.V."/>
            <person name="Gordon J.I."/>
        </authorList>
    </citation>
    <scope>NUCLEOTIDE SEQUENCE [LARGE SCALE GENOMIC DNA]</scope>
    <source>
        <strain>ATCC 29148 / DSM 2079 / JCM 5827 / CCUG 10774 / NCTC 10582 / VPI-5482 / E50</strain>
    </source>
</reference>
<feature type="chain" id="PRO_0000190284" description="Recombination protein RecR">
    <location>
        <begin position="1"/>
        <end position="205"/>
    </location>
</feature>
<feature type="domain" description="Toprim" evidence="1">
    <location>
        <begin position="83"/>
        <end position="178"/>
    </location>
</feature>
<feature type="zinc finger region" description="C4-type" evidence="1">
    <location>
        <begin position="60"/>
        <end position="75"/>
    </location>
</feature>
<evidence type="ECO:0000255" key="1">
    <source>
        <dbReference type="HAMAP-Rule" id="MF_00017"/>
    </source>
</evidence>
<name>RECR_BACTN</name>
<organism>
    <name type="scientific">Bacteroides thetaiotaomicron (strain ATCC 29148 / DSM 2079 / JCM 5827 / CCUG 10774 / NCTC 10582 / VPI-5482 / E50)</name>
    <dbReference type="NCBI Taxonomy" id="226186"/>
    <lineage>
        <taxon>Bacteria</taxon>
        <taxon>Pseudomonadati</taxon>
        <taxon>Bacteroidota</taxon>
        <taxon>Bacteroidia</taxon>
        <taxon>Bacteroidales</taxon>
        <taxon>Bacteroidaceae</taxon>
        <taxon>Bacteroides</taxon>
    </lineage>
</organism>